<proteinExistence type="inferred from homology"/>
<protein>
    <recommendedName>
        <fullName evidence="1">DNA repair protein RecO</fullName>
    </recommendedName>
    <alternativeName>
        <fullName evidence="1">Recombination protein O</fullName>
    </alternativeName>
</protein>
<reference key="1">
    <citation type="journal article" date="2007" name="J. Bacteriol.">
        <title>The complete genome sequence of the lactic acid bacterial paradigm Lactococcus lactis subsp. cremoris MG1363.</title>
        <authorList>
            <person name="Wegmann U."/>
            <person name="O'Connell-Motherway M."/>
            <person name="Zomer A."/>
            <person name="Buist G."/>
            <person name="Shearman C."/>
            <person name="Canchaya C."/>
            <person name="Ventura M."/>
            <person name="Goesmann A."/>
            <person name="Gasson M.J."/>
            <person name="Kuipers O.P."/>
            <person name="van Sinderen D."/>
            <person name="Kok J."/>
        </authorList>
    </citation>
    <scope>NUCLEOTIDE SEQUENCE [LARGE SCALE GENOMIC DNA]</scope>
    <source>
        <strain>MG1363</strain>
    </source>
</reference>
<sequence>MRDAETQGLVLYSRNYKEKDKLVKIFTESFGKRMFFVKNFGKSPYASSLQAFTDGKLTATINDGGFSFIEDVSEVVVYKNISADIFINAHASYIISLADAAISDNQYDPALYGFLKRSLELLDQGFDMEVVTNIFELQVLHRFGVSLNFSECAFCHKTVGPFDFSYKFSGCLCPRHFDEDLRRSHLDPNVIYLINLFQEISLDELKKISIKAEMKAKIRQFIDGLYDEYVGIHLKSKKFLDGMSGWADIMK</sequence>
<comment type="function">
    <text evidence="1">Involved in DNA repair and RecF pathway recombination.</text>
</comment>
<comment type="similarity">
    <text evidence="1">Belongs to the RecO family.</text>
</comment>
<name>RECO_LACLM</name>
<organism>
    <name type="scientific">Lactococcus lactis subsp. cremoris (strain MG1363)</name>
    <dbReference type="NCBI Taxonomy" id="416870"/>
    <lineage>
        <taxon>Bacteria</taxon>
        <taxon>Bacillati</taxon>
        <taxon>Bacillota</taxon>
        <taxon>Bacilli</taxon>
        <taxon>Lactobacillales</taxon>
        <taxon>Streptococcaceae</taxon>
        <taxon>Lactococcus</taxon>
        <taxon>Lactococcus cremoris subsp. cremoris</taxon>
    </lineage>
</organism>
<evidence type="ECO:0000255" key="1">
    <source>
        <dbReference type="HAMAP-Rule" id="MF_00201"/>
    </source>
</evidence>
<accession>A2RHD8</accession>
<keyword id="KW-0227">DNA damage</keyword>
<keyword id="KW-0233">DNA recombination</keyword>
<keyword id="KW-0234">DNA repair</keyword>
<feature type="chain" id="PRO_1000012136" description="DNA repair protein RecO">
    <location>
        <begin position="1"/>
        <end position="251"/>
    </location>
</feature>
<dbReference type="EMBL" id="AM406671">
    <property type="protein sequence ID" value="CAL96674.1"/>
    <property type="molecule type" value="Genomic_DNA"/>
</dbReference>
<dbReference type="RefSeq" id="WP_011834171.1">
    <property type="nucleotide sequence ID" value="NC_009004.1"/>
</dbReference>
<dbReference type="SMR" id="A2RHD8"/>
<dbReference type="STRING" id="416870.llmg_0067"/>
<dbReference type="GeneID" id="61108370"/>
<dbReference type="KEGG" id="llm:llmg_0067"/>
<dbReference type="eggNOG" id="COG1381">
    <property type="taxonomic scope" value="Bacteria"/>
</dbReference>
<dbReference type="HOGENOM" id="CLU_066632_4_0_9"/>
<dbReference type="OrthoDB" id="9797083at2"/>
<dbReference type="PhylomeDB" id="A2RHD8"/>
<dbReference type="Proteomes" id="UP000000364">
    <property type="component" value="Chromosome"/>
</dbReference>
<dbReference type="GO" id="GO:0043590">
    <property type="term" value="C:bacterial nucleoid"/>
    <property type="evidence" value="ECO:0007669"/>
    <property type="project" value="TreeGrafter"/>
</dbReference>
<dbReference type="GO" id="GO:0006310">
    <property type="term" value="P:DNA recombination"/>
    <property type="evidence" value="ECO:0007669"/>
    <property type="project" value="UniProtKB-UniRule"/>
</dbReference>
<dbReference type="GO" id="GO:0006302">
    <property type="term" value="P:double-strand break repair"/>
    <property type="evidence" value="ECO:0007669"/>
    <property type="project" value="TreeGrafter"/>
</dbReference>
<dbReference type="Gene3D" id="2.40.50.140">
    <property type="entry name" value="Nucleic acid-binding proteins"/>
    <property type="match status" value="1"/>
</dbReference>
<dbReference type="Gene3D" id="1.20.1440.120">
    <property type="entry name" value="Recombination protein O, C-terminal domain"/>
    <property type="match status" value="1"/>
</dbReference>
<dbReference type="HAMAP" id="MF_00201">
    <property type="entry name" value="RecO"/>
    <property type="match status" value="1"/>
</dbReference>
<dbReference type="InterPro" id="IPR037278">
    <property type="entry name" value="ARFGAP/RecO"/>
</dbReference>
<dbReference type="InterPro" id="IPR022572">
    <property type="entry name" value="DNA_rep/recomb_RecO_N"/>
</dbReference>
<dbReference type="InterPro" id="IPR012340">
    <property type="entry name" value="NA-bd_OB-fold"/>
</dbReference>
<dbReference type="InterPro" id="IPR003717">
    <property type="entry name" value="RecO"/>
</dbReference>
<dbReference type="InterPro" id="IPR042242">
    <property type="entry name" value="RecO_C"/>
</dbReference>
<dbReference type="NCBIfam" id="TIGR00613">
    <property type="entry name" value="reco"/>
    <property type="match status" value="1"/>
</dbReference>
<dbReference type="PANTHER" id="PTHR33991">
    <property type="entry name" value="DNA REPAIR PROTEIN RECO"/>
    <property type="match status" value="1"/>
</dbReference>
<dbReference type="PANTHER" id="PTHR33991:SF1">
    <property type="entry name" value="DNA REPAIR PROTEIN RECO"/>
    <property type="match status" value="1"/>
</dbReference>
<dbReference type="Pfam" id="PF02565">
    <property type="entry name" value="RecO_C"/>
    <property type="match status" value="1"/>
</dbReference>
<dbReference type="Pfam" id="PF11967">
    <property type="entry name" value="RecO_N"/>
    <property type="match status" value="1"/>
</dbReference>
<dbReference type="SUPFAM" id="SSF57863">
    <property type="entry name" value="ArfGap/RecO-like zinc finger"/>
    <property type="match status" value="1"/>
</dbReference>
<dbReference type="SUPFAM" id="SSF50249">
    <property type="entry name" value="Nucleic acid-binding proteins"/>
    <property type="match status" value="1"/>
</dbReference>
<gene>
    <name evidence="1" type="primary">recO</name>
    <name type="ordered locus">llmg_0067</name>
</gene>